<organism>
    <name type="scientific">Yersinia pestis bv. Antiqua (strain Nepal516)</name>
    <dbReference type="NCBI Taxonomy" id="377628"/>
    <lineage>
        <taxon>Bacteria</taxon>
        <taxon>Pseudomonadati</taxon>
        <taxon>Pseudomonadota</taxon>
        <taxon>Gammaproteobacteria</taxon>
        <taxon>Enterobacterales</taxon>
        <taxon>Yersiniaceae</taxon>
        <taxon>Yersinia</taxon>
    </lineage>
</organism>
<name>UPPP_YERPN</name>
<accession>Q1CMD9</accession>
<accession>C4GP67</accession>
<sequence length="272" mass="29483">MTDMYSLFVAFILGVVEGLTEFLPVSSTGHMIIVGELLGFTGDKAKTFEVIIQLGSILAVVVVFWRRLFGLIGIHFGAVPHEGKTNGHLTLGHILLAMIPAVILGLAFHDVIKALFDPKSVMYALVAGGVLLLAAEWLKPKNPKAVGLDDITYRQAFAIGCFQCLALWPGFSRSGATISGGMLVGVNRYAASEFSFILAVPMMIGASGLDLYKSLHFLTLGDLPMFAVGFITAFIVALIAIKTFLSLIKRISFVPFAIYRFIVAAVVYWVFM</sequence>
<protein>
    <recommendedName>
        <fullName evidence="1">Undecaprenyl-diphosphatase</fullName>
        <ecNumber evidence="1">3.6.1.27</ecNumber>
    </recommendedName>
    <alternativeName>
        <fullName evidence="1">Bacitracin resistance protein</fullName>
    </alternativeName>
    <alternativeName>
        <fullName evidence="1">Undecaprenyl pyrophosphate phosphatase</fullName>
    </alternativeName>
</protein>
<evidence type="ECO:0000255" key="1">
    <source>
        <dbReference type="HAMAP-Rule" id="MF_01006"/>
    </source>
</evidence>
<reference key="1">
    <citation type="journal article" date="2006" name="J. Bacteriol.">
        <title>Complete genome sequence of Yersinia pestis strains Antiqua and Nepal516: evidence of gene reduction in an emerging pathogen.</title>
        <authorList>
            <person name="Chain P.S.G."/>
            <person name="Hu P."/>
            <person name="Malfatti S.A."/>
            <person name="Radnedge L."/>
            <person name="Larimer F."/>
            <person name="Vergez L.M."/>
            <person name="Worsham P."/>
            <person name="Chu M.C."/>
            <person name="Andersen G.L."/>
        </authorList>
    </citation>
    <scope>NUCLEOTIDE SEQUENCE [LARGE SCALE GENOMIC DNA]</scope>
    <source>
        <strain>Nepal516</strain>
    </source>
</reference>
<reference key="2">
    <citation type="submission" date="2009-04" db="EMBL/GenBank/DDBJ databases">
        <title>Yersinia pestis Nepal516A whole genome shotgun sequencing project.</title>
        <authorList>
            <person name="Plunkett G. III"/>
            <person name="Anderson B.D."/>
            <person name="Baumler D.J."/>
            <person name="Burland V."/>
            <person name="Cabot E.L."/>
            <person name="Glasner J.D."/>
            <person name="Mau B."/>
            <person name="Neeno-Eckwall E."/>
            <person name="Perna N.T."/>
            <person name="Munk A.C."/>
            <person name="Tapia R."/>
            <person name="Green L.D."/>
            <person name="Rogers Y.C."/>
            <person name="Detter J.C."/>
            <person name="Bruce D.C."/>
            <person name="Brettin T.S."/>
        </authorList>
    </citation>
    <scope>NUCLEOTIDE SEQUENCE [LARGE SCALE GENOMIC DNA]</scope>
    <source>
        <strain>Nepal516</strain>
    </source>
</reference>
<proteinExistence type="inferred from homology"/>
<comment type="function">
    <text evidence="1">Catalyzes the dephosphorylation of undecaprenyl diphosphate (UPP). Confers resistance to bacitracin.</text>
</comment>
<comment type="catalytic activity">
    <reaction evidence="1">
        <text>di-trans,octa-cis-undecaprenyl diphosphate + H2O = di-trans,octa-cis-undecaprenyl phosphate + phosphate + H(+)</text>
        <dbReference type="Rhea" id="RHEA:28094"/>
        <dbReference type="ChEBI" id="CHEBI:15377"/>
        <dbReference type="ChEBI" id="CHEBI:15378"/>
        <dbReference type="ChEBI" id="CHEBI:43474"/>
        <dbReference type="ChEBI" id="CHEBI:58405"/>
        <dbReference type="ChEBI" id="CHEBI:60392"/>
        <dbReference type="EC" id="3.6.1.27"/>
    </reaction>
</comment>
<comment type="subcellular location">
    <subcellularLocation>
        <location evidence="1">Cell inner membrane</location>
        <topology evidence="1">Multi-pass membrane protein</topology>
    </subcellularLocation>
</comment>
<comment type="miscellaneous">
    <text>Bacitracin is thought to be involved in the inhibition of peptidoglycan synthesis by sequestering undecaprenyl diphosphate, thereby reducing the pool of lipid carrier available.</text>
</comment>
<comment type="similarity">
    <text evidence="1">Belongs to the UppP family.</text>
</comment>
<keyword id="KW-0046">Antibiotic resistance</keyword>
<keyword id="KW-0997">Cell inner membrane</keyword>
<keyword id="KW-1003">Cell membrane</keyword>
<keyword id="KW-0133">Cell shape</keyword>
<keyword id="KW-0961">Cell wall biogenesis/degradation</keyword>
<keyword id="KW-0378">Hydrolase</keyword>
<keyword id="KW-0472">Membrane</keyword>
<keyword id="KW-0573">Peptidoglycan synthesis</keyword>
<keyword id="KW-0812">Transmembrane</keyword>
<keyword id="KW-1133">Transmembrane helix</keyword>
<dbReference type="EC" id="3.6.1.27" evidence="1"/>
<dbReference type="EMBL" id="CP000305">
    <property type="protein sequence ID" value="ABG16841.1"/>
    <property type="molecule type" value="Genomic_DNA"/>
</dbReference>
<dbReference type="EMBL" id="ACNQ01000006">
    <property type="protein sequence ID" value="EEO78299.1"/>
    <property type="molecule type" value="Genomic_DNA"/>
</dbReference>
<dbReference type="SMR" id="Q1CMD9"/>
<dbReference type="KEGG" id="ypn:YPN_0509"/>
<dbReference type="HOGENOM" id="CLU_060296_2_0_6"/>
<dbReference type="Proteomes" id="UP000008936">
    <property type="component" value="Chromosome"/>
</dbReference>
<dbReference type="GO" id="GO:0005886">
    <property type="term" value="C:plasma membrane"/>
    <property type="evidence" value="ECO:0007669"/>
    <property type="project" value="UniProtKB-SubCell"/>
</dbReference>
<dbReference type="GO" id="GO:0050380">
    <property type="term" value="F:undecaprenyl-diphosphatase activity"/>
    <property type="evidence" value="ECO:0007669"/>
    <property type="project" value="UniProtKB-UniRule"/>
</dbReference>
<dbReference type="GO" id="GO:0071555">
    <property type="term" value="P:cell wall organization"/>
    <property type="evidence" value="ECO:0007669"/>
    <property type="project" value="UniProtKB-KW"/>
</dbReference>
<dbReference type="GO" id="GO:0009252">
    <property type="term" value="P:peptidoglycan biosynthetic process"/>
    <property type="evidence" value="ECO:0007669"/>
    <property type="project" value="UniProtKB-KW"/>
</dbReference>
<dbReference type="GO" id="GO:0008360">
    <property type="term" value="P:regulation of cell shape"/>
    <property type="evidence" value="ECO:0007669"/>
    <property type="project" value="UniProtKB-KW"/>
</dbReference>
<dbReference type="GO" id="GO:0046677">
    <property type="term" value="P:response to antibiotic"/>
    <property type="evidence" value="ECO:0007669"/>
    <property type="project" value="UniProtKB-UniRule"/>
</dbReference>
<dbReference type="HAMAP" id="MF_01006">
    <property type="entry name" value="Undec_diphosphatase"/>
    <property type="match status" value="1"/>
</dbReference>
<dbReference type="InterPro" id="IPR003824">
    <property type="entry name" value="UppP"/>
</dbReference>
<dbReference type="NCBIfam" id="NF001388">
    <property type="entry name" value="PRK00281.1-1"/>
    <property type="match status" value="1"/>
</dbReference>
<dbReference type="NCBIfam" id="NF001389">
    <property type="entry name" value="PRK00281.1-2"/>
    <property type="match status" value="1"/>
</dbReference>
<dbReference type="NCBIfam" id="NF001390">
    <property type="entry name" value="PRK00281.1-4"/>
    <property type="match status" value="1"/>
</dbReference>
<dbReference type="NCBIfam" id="TIGR00753">
    <property type="entry name" value="undec_PP_bacA"/>
    <property type="match status" value="1"/>
</dbReference>
<dbReference type="PANTHER" id="PTHR30622">
    <property type="entry name" value="UNDECAPRENYL-DIPHOSPHATASE"/>
    <property type="match status" value="1"/>
</dbReference>
<dbReference type="PANTHER" id="PTHR30622:SF3">
    <property type="entry name" value="UNDECAPRENYL-DIPHOSPHATASE"/>
    <property type="match status" value="1"/>
</dbReference>
<dbReference type="Pfam" id="PF02673">
    <property type="entry name" value="BacA"/>
    <property type="match status" value="1"/>
</dbReference>
<gene>
    <name evidence="1" type="primary">uppP</name>
    <name type="ordered locus">YPN_0509</name>
    <name type="ORF">YP516_0528</name>
</gene>
<feature type="chain" id="PRO_0000290782" description="Undecaprenyl-diphosphatase">
    <location>
        <begin position="1"/>
        <end position="272"/>
    </location>
</feature>
<feature type="transmembrane region" description="Helical" evidence="1">
    <location>
        <begin position="5"/>
        <end position="25"/>
    </location>
</feature>
<feature type="transmembrane region" description="Helical" evidence="1">
    <location>
        <begin position="45"/>
        <end position="65"/>
    </location>
</feature>
<feature type="transmembrane region" description="Helical" evidence="1">
    <location>
        <begin position="88"/>
        <end position="108"/>
    </location>
</feature>
<feature type="transmembrane region" description="Helical" evidence="1">
    <location>
        <begin position="114"/>
        <end position="134"/>
    </location>
</feature>
<feature type="transmembrane region" description="Helical" evidence="1">
    <location>
        <begin position="153"/>
        <end position="172"/>
    </location>
</feature>
<feature type="transmembrane region" description="Helical" evidence="1">
    <location>
        <begin position="189"/>
        <end position="209"/>
    </location>
</feature>
<feature type="transmembrane region" description="Helical" evidence="1">
    <location>
        <begin position="221"/>
        <end position="241"/>
    </location>
</feature>
<feature type="transmembrane region" description="Helical" evidence="1">
    <location>
        <begin position="251"/>
        <end position="271"/>
    </location>
</feature>